<evidence type="ECO:0000255" key="1">
    <source>
        <dbReference type="HAMAP-Rule" id="MF_01031"/>
    </source>
</evidence>
<protein>
    <recommendedName>
        <fullName evidence="1">3-isopropylmalate dehydratase small subunit</fullName>
        <ecNumber evidence="1">4.2.1.33</ecNumber>
    </recommendedName>
    <alternativeName>
        <fullName evidence="1">Alpha-IPM isomerase</fullName>
        <shortName evidence="1">IPMI</shortName>
    </alternativeName>
    <alternativeName>
        <fullName evidence="1">Isopropylmalate isomerase</fullName>
    </alternativeName>
</protein>
<organism>
    <name type="scientific">Pseudomonas putida (strain W619)</name>
    <dbReference type="NCBI Taxonomy" id="390235"/>
    <lineage>
        <taxon>Bacteria</taxon>
        <taxon>Pseudomonadati</taxon>
        <taxon>Pseudomonadota</taxon>
        <taxon>Gammaproteobacteria</taxon>
        <taxon>Pseudomonadales</taxon>
        <taxon>Pseudomonadaceae</taxon>
        <taxon>Pseudomonas</taxon>
    </lineage>
</organism>
<name>LEUD_PSEPW</name>
<proteinExistence type="inferred from homology"/>
<accession>B1J531</accession>
<feature type="chain" id="PRO_1000135826" description="3-isopropylmalate dehydratase small subunit">
    <location>
        <begin position="1"/>
        <end position="214"/>
    </location>
</feature>
<dbReference type="EC" id="4.2.1.33" evidence="1"/>
<dbReference type="EMBL" id="CP000949">
    <property type="protein sequence ID" value="ACA72054.1"/>
    <property type="molecule type" value="Genomic_DNA"/>
</dbReference>
<dbReference type="SMR" id="B1J531"/>
<dbReference type="STRING" id="390235.PputW619_1549"/>
<dbReference type="KEGG" id="ppw:PputW619_1549"/>
<dbReference type="eggNOG" id="COG0066">
    <property type="taxonomic scope" value="Bacteria"/>
</dbReference>
<dbReference type="HOGENOM" id="CLU_081378_0_3_6"/>
<dbReference type="OrthoDB" id="9777465at2"/>
<dbReference type="UniPathway" id="UPA00048">
    <property type="reaction ID" value="UER00071"/>
</dbReference>
<dbReference type="GO" id="GO:0009316">
    <property type="term" value="C:3-isopropylmalate dehydratase complex"/>
    <property type="evidence" value="ECO:0007669"/>
    <property type="project" value="InterPro"/>
</dbReference>
<dbReference type="GO" id="GO:0003861">
    <property type="term" value="F:3-isopropylmalate dehydratase activity"/>
    <property type="evidence" value="ECO:0007669"/>
    <property type="project" value="UniProtKB-UniRule"/>
</dbReference>
<dbReference type="GO" id="GO:0009098">
    <property type="term" value="P:L-leucine biosynthetic process"/>
    <property type="evidence" value="ECO:0007669"/>
    <property type="project" value="UniProtKB-UniRule"/>
</dbReference>
<dbReference type="CDD" id="cd01577">
    <property type="entry name" value="IPMI_Swivel"/>
    <property type="match status" value="1"/>
</dbReference>
<dbReference type="FunFam" id="3.20.19.10:FF:000003">
    <property type="entry name" value="3-isopropylmalate dehydratase small subunit"/>
    <property type="match status" value="1"/>
</dbReference>
<dbReference type="Gene3D" id="3.20.19.10">
    <property type="entry name" value="Aconitase, domain 4"/>
    <property type="match status" value="1"/>
</dbReference>
<dbReference type="HAMAP" id="MF_01031">
    <property type="entry name" value="LeuD_type1"/>
    <property type="match status" value="1"/>
</dbReference>
<dbReference type="InterPro" id="IPR004431">
    <property type="entry name" value="3-IsopropMal_deHydase_ssu"/>
</dbReference>
<dbReference type="InterPro" id="IPR015928">
    <property type="entry name" value="Aconitase/3IPM_dehydase_swvl"/>
</dbReference>
<dbReference type="InterPro" id="IPR000573">
    <property type="entry name" value="AconitaseA/IPMdHydase_ssu_swvl"/>
</dbReference>
<dbReference type="InterPro" id="IPR033940">
    <property type="entry name" value="IPMI_Swivel"/>
</dbReference>
<dbReference type="InterPro" id="IPR050075">
    <property type="entry name" value="LeuD"/>
</dbReference>
<dbReference type="NCBIfam" id="TIGR00171">
    <property type="entry name" value="leuD"/>
    <property type="match status" value="1"/>
</dbReference>
<dbReference type="NCBIfam" id="NF002458">
    <property type="entry name" value="PRK01641.1"/>
    <property type="match status" value="1"/>
</dbReference>
<dbReference type="PANTHER" id="PTHR43345:SF5">
    <property type="entry name" value="3-ISOPROPYLMALATE DEHYDRATASE SMALL SUBUNIT"/>
    <property type="match status" value="1"/>
</dbReference>
<dbReference type="PANTHER" id="PTHR43345">
    <property type="entry name" value="3-ISOPROPYLMALATE DEHYDRATASE SMALL SUBUNIT 2-RELATED-RELATED"/>
    <property type="match status" value="1"/>
</dbReference>
<dbReference type="Pfam" id="PF00694">
    <property type="entry name" value="Aconitase_C"/>
    <property type="match status" value="1"/>
</dbReference>
<dbReference type="SUPFAM" id="SSF52016">
    <property type="entry name" value="LeuD/IlvD-like"/>
    <property type="match status" value="1"/>
</dbReference>
<gene>
    <name evidence="1" type="primary">leuD</name>
    <name type="ordered locus">PputW619_1549</name>
</gene>
<keyword id="KW-0028">Amino-acid biosynthesis</keyword>
<keyword id="KW-0100">Branched-chain amino acid biosynthesis</keyword>
<keyword id="KW-0432">Leucine biosynthesis</keyword>
<keyword id="KW-0456">Lyase</keyword>
<comment type="function">
    <text evidence="1">Catalyzes the isomerization between 2-isopropylmalate and 3-isopropylmalate, via the formation of 2-isopropylmaleate.</text>
</comment>
<comment type="catalytic activity">
    <reaction evidence="1">
        <text>(2R,3S)-3-isopropylmalate = (2S)-2-isopropylmalate</text>
        <dbReference type="Rhea" id="RHEA:32287"/>
        <dbReference type="ChEBI" id="CHEBI:1178"/>
        <dbReference type="ChEBI" id="CHEBI:35121"/>
        <dbReference type="EC" id="4.2.1.33"/>
    </reaction>
</comment>
<comment type="pathway">
    <text evidence="1">Amino-acid biosynthesis; L-leucine biosynthesis; L-leucine from 3-methyl-2-oxobutanoate: step 2/4.</text>
</comment>
<comment type="subunit">
    <text evidence="1">Heterodimer of LeuC and LeuD.</text>
</comment>
<comment type="similarity">
    <text evidence="1">Belongs to the LeuD family. LeuD type 1 subfamily.</text>
</comment>
<reference key="1">
    <citation type="submission" date="2008-02" db="EMBL/GenBank/DDBJ databases">
        <title>Complete sequence of Pseudomonas putida W619.</title>
        <authorList>
            <person name="Copeland A."/>
            <person name="Lucas S."/>
            <person name="Lapidus A."/>
            <person name="Barry K."/>
            <person name="Detter J.C."/>
            <person name="Glavina del Rio T."/>
            <person name="Dalin E."/>
            <person name="Tice H."/>
            <person name="Pitluck S."/>
            <person name="Chain P."/>
            <person name="Malfatti S."/>
            <person name="Shin M."/>
            <person name="Vergez L."/>
            <person name="Schmutz J."/>
            <person name="Larimer F."/>
            <person name="Land M."/>
            <person name="Hauser L."/>
            <person name="Kyrpides N."/>
            <person name="Kim E."/>
            <person name="Taghavi S."/>
            <person name="Vangronsveld D."/>
            <person name="van der Lelie D."/>
            <person name="Richardson P."/>
        </authorList>
    </citation>
    <scope>NUCLEOTIDE SEQUENCE [LARGE SCALE GENOMIC DNA]</scope>
    <source>
        <strain>W619</strain>
    </source>
</reference>
<sequence length="214" mass="24295">MKAFTQHTGLVAPLDRANVDTDQIIPKQFLKSIKRTGFGPNLFDEWRYLDVGQPYQDNSKRPLNQEFVLNHERYQGASVLLARENFGCGSSREHAPWALDEYGFRSVIAPSFADIFFNNSFKNGLLPIILSDEEVEELFKQVEANPGYQLTIDLQAQAVTRPDGKVLHFEIDAFRKHCLLNGLDDIGLTLQDGEAIKAFEGKHRAAQPWLFRDA</sequence>